<accession>Q5PG96</accession>
<organism>
    <name type="scientific">Salmonella paratyphi A (strain ATCC 9150 / SARB42)</name>
    <dbReference type="NCBI Taxonomy" id="295319"/>
    <lineage>
        <taxon>Bacteria</taxon>
        <taxon>Pseudomonadati</taxon>
        <taxon>Pseudomonadota</taxon>
        <taxon>Gammaproteobacteria</taxon>
        <taxon>Enterobacterales</taxon>
        <taxon>Enterobacteriaceae</taxon>
        <taxon>Salmonella</taxon>
    </lineage>
</organism>
<comment type="function">
    <text evidence="1">Catalyzes the reversible retro-aldol cleavage of 4-hydroxy-2-ketoheptane-1,7-dioate (HKHD) to pyruvate and succinic semialdehyde.</text>
</comment>
<comment type="catalytic activity">
    <reaction evidence="1">
        <text>4-hydroxy-2-oxoheptanedioate = succinate semialdehyde + pyruvate</text>
        <dbReference type="Rhea" id="RHEA:25788"/>
        <dbReference type="ChEBI" id="CHEBI:15361"/>
        <dbReference type="ChEBI" id="CHEBI:57706"/>
        <dbReference type="ChEBI" id="CHEBI:73036"/>
        <dbReference type="EC" id="4.1.2.52"/>
    </reaction>
</comment>
<comment type="cofactor">
    <cofactor evidence="1">
        <name>a divalent metal cation</name>
        <dbReference type="ChEBI" id="CHEBI:60240"/>
    </cofactor>
    <text evidence="1">Binds 1 divalent metal cation per subunit.</text>
</comment>
<comment type="pathway">
    <text evidence="1">Aromatic compound metabolism; 4-hydroxyphenylacetate degradation; pyruvate and succinate semialdehyde from 4-hydroxyphenylacetate: step 7/7.</text>
</comment>
<comment type="subunit">
    <text evidence="1">Homohexamer; trimer of dimers.</text>
</comment>
<comment type="similarity">
    <text evidence="1">Belongs to the HpcH/HpaI aldolase family.</text>
</comment>
<evidence type="ECO:0000255" key="1">
    <source>
        <dbReference type="HAMAP-Rule" id="MF_01292"/>
    </source>
</evidence>
<keyword id="KW-0058">Aromatic hydrocarbons catabolism</keyword>
<keyword id="KW-0456">Lyase</keyword>
<keyword id="KW-0479">Metal-binding</keyword>
<protein>
    <recommendedName>
        <fullName evidence="1">4-hydroxy-2-oxo-heptane-1,7-dioate aldolase</fullName>
        <ecNumber evidence="1">4.1.2.52</ecNumber>
    </recommendedName>
    <alternativeName>
        <fullName evidence="1">2,4-dihydroxyhept-2-ene-1,7-dioic acid aldolase</fullName>
        <shortName evidence="1">HHED aldolase</shortName>
    </alternativeName>
    <alternativeName>
        <fullName evidence="1">4-hydroxy-2-ketoheptane-1,7-dioate aldolase</fullName>
        <shortName evidence="1">HKHD aldolase</shortName>
    </alternativeName>
</protein>
<reference key="1">
    <citation type="journal article" date="2004" name="Nat. Genet.">
        <title>Comparison of genome degradation in Paratyphi A and Typhi, human-restricted serovars of Salmonella enterica that cause typhoid.</title>
        <authorList>
            <person name="McClelland M."/>
            <person name="Sanderson K.E."/>
            <person name="Clifton S.W."/>
            <person name="Latreille P."/>
            <person name="Porwollik S."/>
            <person name="Sabo A."/>
            <person name="Meyer R."/>
            <person name="Bieri T."/>
            <person name="Ozersky P."/>
            <person name="McLellan M."/>
            <person name="Harkins C.R."/>
            <person name="Wang C."/>
            <person name="Nguyen C."/>
            <person name="Berghoff A."/>
            <person name="Elliott G."/>
            <person name="Kohlberg S."/>
            <person name="Strong C."/>
            <person name="Du F."/>
            <person name="Carter J."/>
            <person name="Kremizki C."/>
            <person name="Layman D."/>
            <person name="Leonard S."/>
            <person name="Sun H."/>
            <person name="Fulton L."/>
            <person name="Nash W."/>
            <person name="Miner T."/>
            <person name="Minx P."/>
            <person name="Delehaunty K."/>
            <person name="Fronick C."/>
            <person name="Magrini V."/>
            <person name="Nhan M."/>
            <person name="Warren W."/>
            <person name="Florea L."/>
            <person name="Spieth J."/>
            <person name="Wilson R.K."/>
        </authorList>
    </citation>
    <scope>NUCLEOTIDE SEQUENCE [LARGE SCALE GENOMIC DNA]</scope>
    <source>
        <strain>ATCC 9150 / SARB42</strain>
    </source>
</reference>
<proteinExistence type="inferred from homology"/>
<gene>
    <name evidence="1" type="primary">hpcH</name>
    <name evidence="1" type="synonym">hpaI</name>
    <name type="ordered locus">SPA1744</name>
</gene>
<feature type="chain" id="PRO_0000355108" description="4-hydroxy-2-oxo-heptane-1,7-dioate aldolase">
    <location>
        <begin position="1"/>
        <end position="263"/>
    </location>
</feature>
<feature type="active site" description="Proton acceptor" evidence="1">
    <location>
        <position position="45"/>
    </location>
</feature>
<feature type="binding site" evidence="1">
    <location>
        <position position="147"/>
    </location>
    <ligand>
        <name>substrate</name>
    </ligand>
</feature>
<feature type="binding site" evidence="1">
    <location>
        <position position="149"/>
    </location>
    <ligand>
        <name>a divalent metal cation</name>
        <dbReference type="ChEBI" id="CHEBI:60240"/>
    </ligand>
</feature>
<feature type="binding site" evidence="1">
    <location>
        <position position="174"/>
    </location>
    <ligand>
        <name>substrate</name>
    </ligand>
</feature>
<feature type="binding site" evidence="1">
    <location>
        <position position="175"/>
    </location>
    <ligand>
        <name>a divalent metal cation</name>
        <dbReference type="ChEBI" id="CHEBI:60240"/>
    </ligand>
</feature>
<feature type="binding site" evidence="1">
    <location>
        <position position="175"/>
    </location>
    <ligand>
        <name>substrate</name>
    </ligand>
</feature>
<feature type="site" description="Transition state stabilizer" evidence="1">
    <location>
        <position position="70"/>
    </location>
</feature>
<feature type="site" description="Increases basicity of active site His" evidence="1">
    <location>
        <position position="84"/>
    </location>
</feature>
<name>HPCH_SALPA</name>
<dbReference type="EC" id="4.1.2.52" evidence="1"/>
<dbReference type="EMBL" id="CP000026">
    <property type="protein sequence ID" value="AAV77664.1"/>
    <property type="molecule type" value="Genomic_DNA"/>
</dbReference>
<dbReference type="RefSeq" id="WP_000785059.1">
    <property type="nucleotide sequence ID" value="NC_006511.1"/>
</dbReference>
<dbReference type="SMR" id="Q5PG96"/>
<dbReference type="KEGG" id="spt:SPA1744"/>
<dbReference type="HOGENOM" id="CLU_059964_1_0_6"/>
<dbReference type="UniPathway" id="UPA00208">
    <property type="reaction ID" value="UER00422"/>
</dbReference>
<dbReference type="Proteomes" id="UP000008185">
    <property type="component" value="Chromosome"/>
</dbReference>
<dbReference type="GO" id="GO:0005737">
    <property type="term" value="C:cytoplasm"/>
    <property type="evidence" value="ECO:0007669"/>
    <property type="project" value="TreeGrafter"/>
</dbReference>
<dbReference type="GO" id="GO:0043863">
    <property type="term" value="F:4-hydroxy-2-ketopimelate aldolase activity"/>
    <property type="evidence" value="ECO:0007669"/>
    <property type="project" value="RHEA"/>
</dbReference>
<dbReference type="GO" id="GO:0046872">
    <property type="term" value="F:metal ion binding"/>
    <property type="evidence" value="ECO:0007669"/>
    <property type="project" value="UniProtKB-UniRule"/>
</dbReference>
<dbReference type="GO" id="GO:1901023">
    <property type="term" value="P:4-hydroxyphenylacetate catabolic process"/>
    <property type="evidence" value="ECO:0007669"/>
    <property type="project" value="UniProtKB-UniRule"/>
</dbReference>
<dbReference type="GO" id="GO:0010124">
    <property type="term" value="P:phenylacetate catabolic process"/>
    <property type="evidence" value="ECO:0007669"/>
    <property type="project" value="InterPro"/>
</dbReference>
<dbReference type="FunFam" id="3.20.20.60:FF:000004">
    <property type="entry name" value="5-keto-4-deoxy-D-glucarate aldolase"/>
    <property type="match status" value="1"/>
</dbReference>
<dbReference type="Gene3D" id="3.20.20.60">
    <property type="entry name" value="Phosphoenolpyruvate-binding domains"/>
    <property type="match status" value="1"/>
</dbReference>
<dbReference type="HAMAP" id="MF_01292">
    <property type="entry name" value="HKHD_aldolase"/>
    <property type="match status" value="1"/>
</dbReference>
<dbReference type="InterPro" id="IPR005000">
    <property type="entry name" value="Aldolase/citrate-lyase_domain"/>
</dbReference>
<dbReference type="InterPro" id="IPR023701">
    <property type="entry name" value="HKHD_aldolase_ent"/>
</dbReference>
<dbReference type="InterPro" id="IPR012689">
    <property type="entry name" value="HpaI"/>
</dbReference>
<dbReference type="InterPro" id="IPR050251">
    <property type="entry name" value="HpcH-HpaI_aldolase"/>
</dbReference>
<dbReference type="InterPro" id="IPR015813">
    <property type="entry name" value="Pyrv/PenolPyrv_kinase-like_dom"/>
</dbReference>
<dbReference type="InterPro" id="IPR040442">
    <property type="entry name" value="Pyrv_kinase-like_dom_sf"/>
</dbReference>
<dbReference type="NCBIfam" id="TIGR02311">
    <property type="entry name" value="HpaI"/>
    <property type="match status" value="1"/>
</dbReference>
<dbReference type="PANTHER" id="PTHR30502">
    <property type="entry name" value="2-KETO-3-DEOXY-L-RHAMNONATE ALDOLASE"/>
    <property type="match status" value="1"/>
</dbReference>
<dbReference type="PANTHER" id="PTHR30502:SF0">
    <property type="entry name" value="PHOSPHOENOLPYRUVATE CARBOXYLASE FAMILY PROTEIN"/>
    <property type="match status" value="1"/>
</dbReference>
<dbReference type="Pfam" id="PF03328">
    <property type="entry name" value="HpcH_HpaI"/>
    <property type="match status" value="1"/>
</dbReference>
<dbReference type="SUPFAM" id="SSF51621">
    <property type="entry name" value="Phosphoenolpyruvate/pyruvate domain"/>
    <property type="match status" value="1"/>
</dbReference>
<sequence>MKNAFKDALKAGRPQIGLWLGLANSYSAELLAGAGFDWLLIDGEHAPNNVQTVLTQLQAIAPYPSQPVVRPSWNDPVQIKQLLDVGAQTLLIPMVQNADEARNAVAATRYPPAGIRGVGSALARASRWNRIPDYLHLANDAMCVLVQIETREAMSNLASILDVDGIDGVFIGPADLSADMGFAGNPQHPEVQAAIENAIVQIRAAGKAPGILMANEALAKRYLELGALFVAVGVDTTLLARGAEALAARFGAEKNLSGASGVY</sequence>